<dbReference type="EMBL" id="Z11497">
    <property type="protein sequence ID" value="CAA77573.1"/>
    <property type="molecule type" value="Genomic_DNA"/>
</dbReference>
<dbReference type="PIR" id="S18998">
    <property type="entry name" value="S18998"/>
</dbReference>
<dbReference type="SMR" id="P30428"/>
<dbReference type="Gene3D" id="3.50.50.60">
    <property type="entry name" value="FAD/NAD(P)-binding domain"/>
    <property type="match status" value="2"/>
</dbReference>
<dbReference type="InterPro" id="IPR036188">
    <property type="entry name" value="FAD/NAD-bd_sf"/>
</dbReference>
<dbReference type="Pfam" id="PF13738">
    <property type="entry name" value="Pyr_redox_3"/>
    <property type="match status" value="1"/>
</dbReference>
<dbReference type="SUPFAM" id="SSF51905">
    <property type="entry name" value="FAD/NAD(P)-binding domain"/>
    <property type="match status" value="1"/>
</dbReference>
<feature type="chain" id="PRO_0000049685" description="Uncharacterized protein in ansA 5'region">
    <location>
        <begin position="1" status="less than"/>
        <end position="122"/>
    </location>
</feature>
<feature type="non-terminal residue">
    <location>
        <position position="1"/>
    </location>
</feature>
<evidence type="ECO:0000305" key="1"/>
<organism>
    <name type="scientific">Bacillus licheniformis</name>
    <dbReference type="NCBI Taxonomy" id="1402"/>
    <lineage>
        <taxon>Bacteria</taxon>
        <taxon>Bacillati</taxon>
        <taxon>Bacillota</taxon>
        <taxon>Bacilli</taxon>
        <taxon>Bacillales</taxon>
        <taxon>Bacillaceae</taxon>
        <taxon>Bacillus</taxon>
    </lineage>
</organism>
<accession>P30428</accession>
<protein>
    <recommendedName>
        <fullName>Uncharacterized protein in ansA 5'region</fullName>
    </recommendedName>
    <alternativeName>
        <fullName>ORFA</fullName>
    </alternativeName>
</protein>
<sequence length="122" mass="13716">ILPEFLSLVKHGKIRMEFRAVVKEITEDELIFSVDGKETRIKNDFVFAMTGYHPDHSFLQKMGVKIDAESGRPFFNEETMETNEEGIFIAGVIAAGNNANEIFIENGRFHGGLIAAEIAKRI</sequence>
<comment type="similarity">
    <text evidence="1">To B.subtilis YpdA.</text>
</comment>
<proteinExistence type="predicted"/>
<reference key="1">
    <citation type="journal article" date="1991" name="FEMS Microbiol. Lett.">
        <title>Lack of specific hybridization between the lep genes of Salmonella typhimurium and Bacillus licheniformis.</title>
        <authorList>
            <person name="van Dijl J.M."/>
            <person name="de Jong A."/>
            <person name="Smith H."/>
            <person name="Bron S."/>
            <person name="Venema G."/>
        </authorList>
    </citation>
    <scope>NUCLEOTIDE SEQUENCE [GENOMIC DNA]</scope>
</reference>
<name>YANA_BACLI</name>